<protein>
    <recommendedName>
        <fullName evidence="1">ATP phosphoribosyltransferase</fullName>
        <shortName evidence="1">ATP-PRT</shortName>
        <shortName evidence="1">ATP-PRTase</shortName>
        <ecNumber evidence="1">2.4.2.17</ecNumber>
    </recommendedName>
</protein>
<evidence type="ECO:0000255" key="1">
    <source>
        <dbReference type="HAMAP-Rule" id="MF_01018"/>
    </source>
</evidence>
<proteinExistence type="inferred from homology"/>
<gene>
    <name evidence="1" type="primary">hisG</name>
    <name type="ordered locus">PSPPH_4138</name>
</gene>
<feature type="chain" id="PRO_0000229328" description="ATP phosphoribosyltransferase">
    <location>
        <begin position="1"/>
        <end position="211"/>
    </location>
</feature>
<accession>Q48EC8</accession>
<keyword id="KW-0028">Amino-acid biosynthesis</keyword>
<keyword id="KW-0067">ATP-binding</keyword>
<keyword id="KW-0963">Cytoplasm</keyword>
<keyword id="KW-0328">Glycosyltransferase</keyword>
<keyword id="KW-0368">Histidine biosynthesis</keyword>
<keyword id="KW-0547">Nucleotide-binding</keyword>
<keyword id="KW-0808">Transferase</keyword>
<name>HIS1_PSE14</name>
<comment type="function">
    <text evidence="1">Catalyzes the condensation of ATP and 5-phosphoribose 1-diphosphate to form N'-(5'-phosphoribosyl)-ATP (PR-ATP). Has a crucial role in the pathway because the rate of histidine biosynthesis seems to be controlled primarily by regulation of HisG enzymatic activity.</text>
</comment>
<comment type="catalytic activity">
    <reaction evidence="1">
        <text>1-(5-phospho-beta-D-ribosyl)-ATP + diphosphate = 5-phospho-alpha-D-ribose 1-diphosphate + ATP</text>
        <dbReference type="Rhea" id="RHEA:18473"/>
        <dbReference type="ChEBI" id="CHEBI:30616"/>
        <dbReference type="ChEBI" id="CHEBI:33019"/>
        <dbReference type="ChEBI" id="CHEBI:58017"/>
        <dbReference type="ChEBI" id="CHEBI:73183"/>
        <dbReference type="EC" id="2.4.2.17"/>
    </reaction>
</comment>
<comment type="pathway">
    <text evidence="1">Amino-acid biosynthesis; L-histidine biosynthesis; L-histidine from 5-phospho-alpha-D-ribose 1-diphosphate: step 1/9.</text>
</comment>
<comment type="subunit">
    <text evidence="1">Heteromultimer composed of HisG and HisZ subunits.</text>
</comment>
<comment type="subcellular location">
    <subcellularLocation>
        <location evidence="1">Cytoplasm</location>
    </subcellularLocation>
</comment>
<comment type="domain">
    <text>Lacks the C-terminal regulatory region which is replaced by HisZ.</text>
</comment>
<comment type="similarity">
    <text evidence="1">Belongs to the ATP phosphoribosyltransferase family. Short subfamily.</text>
</comment>
<sequence length="211" mass="22967">MLTIALSKGRILDDTLPLLAEAGIVPTENPDKSRKLIIPTTQADVRLLIVRATDVPTYVEHGAADLGVAGKDVLMEYTGQGLYEPLDLQIAKCKLMTAGAIGAVEPKGRLRVATKFVNVAKRYYAEQGRQVDIIKLYGSMELAPLIGLADKIIDVVDTGNTLRANGLEPQELIATISSRLVVNKASMKMQHARIQALIDTLRKAVESRHRS</sequence>
<organism>
    <name type="scientific">Pseudomonas savastanoi pv. phaseolicola (strain 1448A / Race 6)</name>
    <name type="common">Pseudomonas syringae pv. phaseolicola (strain 1448A / Race 6)</name>
    <dbReference type="NCBI Taxonomy" id="264730"/>
    <lineage>
        <taxon>Bacteria</taxon>
        <taxon>Pseudomonadati</taxon>
        <taxon>Pseudomonadota</taxon>
        <taxon>Gammaproteobacteria</taxon>
        <taxon>Pseudomonadales</taxon>
        <taxon>Pseudomonadaceae</taxon>
        <taxon>Pseudomonas</taxon>
    </lineage>
</organism>
<reference key="1">
    <citation type="journal article" date="2005" name="J. Bacteriol.">
        <title>Whole-genome sequence analysis of Pseudomonas syringae pv. phaseolicola 1448A reveals divergence among pathovars in genes involved in virulence and transposition.</title>
        <authorList>
            <person name="Joardar V."/>
            <person name="Lindeberg M."/>
            <person name="Jackson R.W."/>
            <person name="Selengut J."/>
            <person name="Dodson R."/>
            <person name="Brinkac L.M."/>
            <person name="Daugherty S.C."/>
            <person name="DeBoy R.T."/>
            <person name="Durkin A.S."/>
            <person name="Gwinn Giglio M."/>
            <person name="Madupu R."/>
            <person name="Nelson W.C."/>
            <person name="Rosovitz M.J."/>
            <person name="Sullivan S.A."/>
            <person name="Crabtree J."/>
            <person name="Creasy T."/>
            <person name="Davidsen T.M."/>
            <person name="Haft D.H."/>
            <person name="Zafar N."/>
            <person name="Zhou L."/>
            <person name="Halpin R."/>
            <person name="Holley T."/>
            <person name="Khouri H.M."/>
            <person name="Feldblyum T.V."/>
            <person name="White O."/>
            <person name="Fraser C.M."/>
            <person name="Chatterjee A.K."/>
            <person name="Cartinhour S."/>
            <person name="Schneider D."/>
            <person name="Mansfield J.W."/>
            <person name="Collmer A."/>
            <person name="Buell R."/>
        </authorList>
    </citation>
    <scope>NUCLEOTIDE SEQUENCE [LARGE SCALE GENOMIC DNA]</scope>
    <source>
        <strain>1448A / Race 6</strain>
    </source>
</reference>
<dbReference type="EC" id="2.4.2.17" evidence="1"/>
<dbReference type="EMBL" id="CP000058">
    <property type="protein sequence ID" value="AAZ33126.1"/>
    <property type="molecule type" value="Genomic_DNA"/>
</dbReference>
<dbReference type="RefSeq" id="WP_002555077.1">
    <property type="nucleotide sequence ID" value="NC_005773.3"/>
</dbReference>
<dbReference type="SMR" id="Q48EC8"/>
<dbReference type="GeneID" id="96220612"/>
<dbReference type="KEGG" id="psp:PSPPH_4138"/>
<dbReference type="eggNOG" id="COG0040">
    <property type="taxonomic scope" value="Bacteria"/>
</dbReference>
<dbReference type="HOGENOM" id="CLU_038115_2_0_6"/>
<dbReference type="UniPathway" id="UPA00031">
    <property type="reaction ID" value="UER00006"/>
</dbReference>
<dbReference type="Proteomes" id="UP000000551">
    <property type="component" value="Chromosome"/>
</dbReference>
<dbReference type="GO" id="GO:0005737">
    <property type="term" value="C:cytoplasm"/>
    <property type="evidence" value="ECO:0007669"/>
    <property type="project" value="UniProtKB-SubCell"/>
</dbReference>
<dbReference type="GO" id="GO:0005524">
    <property type="term" value="F:ATP binding"/>
    <property type="evidence" value="ECO:0007669"/>
    <property type="project" value="UniProtKB-KW"/>
</dbReference>
<dbReference type="GO" id="GO:0003879">
    <property type="term" value="F:ATP phosphoribosyltransferase activity"/>
    <property type="evidence" value="ECO:0007669"/>
    <property type="project" value="UniProtKB-UniRule"/>
</dbReference>
<dbReference type="GO" id="GO:0000105">
    <property type="term" value="P:L-histidine biosynthetic process"/>
    <property type="evidence" value="ECO:0007669"/>
    <property type="project" value="UniProtKB-UniRule"/>
</dbReference>
<dbReference type="CDD" id="cd13595">
    <property type="entry name" value="PBP2_HisGs"/>
    <property type="match status" value="1"/>
</dbReference>
<dbReference type="FunFam" id="3.40.190.10:FF:000011">
    <property type="entry name" value="ATP phosphoribosyltransferase"/>
    <property type="match status" value="1"/>
</dbReference>
<dbReference type="FunFam" id="3.40.190.10:FF:000022">
    <property type="entry name" value="ATP phosphoribosyltransferase"/>
    <property type="match status" value="1"/>
</dbReference>
<dbReference type="Gene3D" id="3.40.190.10">
    <property type="entry name" value="Periplasmic binding protein-like II"/>
    <property type="match status" value="2"/>
</dbReference>
<dbReference type="HAMAP" id="MF_01018">
    <property type="entry name" value="HisG_Short"/>
    <property type="match status" value="1"/>
</dbReference>
<dbReference type="InterPro" id="IPR013820">
    <property type="entry name" value="ATP_PRibTrfase_cat"/>
</dbReference>
<dbReference type="InterPro" id="IPR018198">
    <property type="entry name" value="ATP_PRibTrfase_CS"/>
</dbReference>
<dbReference type="InterPro" id="IPR001348">
    <property type="entry name" value="ATP_PRibTrfase_HisG"/>
</dbReference>
<dbReference type="InterPro" id="IPR024893">
    <property type="entry name" value="ATP_PRibTrfase_HisG_short"/>
</dbReference>
<dbReference type="NCBIfam" id="TIGR00070">
    <property type="entry name" value="hisG"/>
    <property type="match status" value="1"/>
</dbReference>
<dbReference type="PANTHER" id="PTHR21403:SF8">
    <property type="entry name" value="ATP PHOSPHORIBOSYLTRANSFERASE"/>
    <property type="match status" value="1"/>
</dbReference>
<dbReference type="PANTHER" id="PTHR21403">
    <property type="entry name" value="ATP PHOSPHORIBOSYLTRANSFERASE ATP-PRTASE"/>
    <property type="match status" value="1"/>
</dbReference>
<dbReference type="Pfam" id="PF01634">
    <property type="entry name" value="HisG"/>
    <property type="match status" value="1"/>
</dbReference>
<dbReference type="SUPFAM" id="SSF53850">
    <property type="entry name" value="Periplasmic binding protein-like II"/>
    <property type="match status" value="1"/>
</dbReference>
<dbReference type="PROSITE" id="PS01316">
    <property type="entry name" value="ATP_P_PHORIBOSYLTR"/>
    <property type="match status" value="1"/>
</dbReference>